<protein>
    <recommendedName>
        <fullName evidence="1">Holliday junction branch migration complex subunit RuvA</fullName>
    </recommendedName>
</protein>
<feature type="chain" id="PRO_0000094635" description="Holliday junction branch migration complex subunit RuvA">
    <location>
        <begin position="1"/>
        <end position="201"/>
    </location>
</feature>
<feature type="region of interest" description="Domain I" evidence="1">
    <location>
        <begin position="1"/>
        <end position="64"/>
    </location>
</feature>
<feature type="region of interest" description="Domain II" evidence="1">
    <location>
        <begin position="65"/>
        <end position="143"/>
    </location>
</feature>
<feature type="region of interest" description="Flexible linker" evidence="1">
    <location>
        <begin position="144"/>
        <end position="154"/>
    </location>
</feature>
<feature type="region of interest" description="Domain III" evidence="1">
    <location>
        <begin position="154"/>
        <end position="201"/>
    </location>
</feature>
<organism>
    <name type="scientific">Haemophilus ducreyi (strain 35000HP / ATCC 700724)</name>
    <dbReference type="NCBI Taxonomy" id="233412"/>
    <lineage>
        <taxon>Bacteria</taxon>
        <taxon>Pseudomonadati</taxon>
        <taxon>Pseudomonadota</taxon>
        <taxon>Gammaproteobacteria</taxon>
        <taxon>Pasteurellales</taxon>
        <taxon>Pasteurellaceae</taxon>
        <taxon>Haemophilus</taxon>
    </lineage>
</organism>
<sequence>MIGRLYGKIIEKQPPEMVIDVQGIGYEVLLPMTSFYHLPQVGEEATIFTHLVVREDAHLLFGFAQKQDRTLFRELIKTNGVGPKLALAILSAMSVVQFANAVENEELVKLTKIPGVGRKTAERLLVELKGKFKGIAQTDFFVEHSHETMVATYEIDASEEARDALLALGYKLTDAEKMIKKVHKSGATSEQLIRDALKASL</sequence>
<gene>
    <name evidence="1" type="primary">ruvA</name>
    <name type="ordered locus">HD_1758</name>
</gene>
<comment type="function">
    <text evidence="1">The RuvA-RuvB-RuvC complex processes Holliday junction (HJ) DNA during genetic recombination and DNA repair, while the RuvA-RuvB complex plays an important role in the rescue of blocked DNA replication forks via replication fork reversal (RFR). RuvA specifically binds to HJ cruciform DNA, conferring on it an open structure. The RuvB hexamer acts as an ATP-dependent pump, pulling dsDNA into and through the RuvAB complex. HJ branch migration allows RuvC to scan DNA until it finds its consensus sequence, where it cleaves and resolves the cruciform DNA.</text>
</comment>
<comment type="subunit">
    <text evidence="1">Homotetramer. Forms an RuvA(8)-RuvB(12)-Holliday junction (HJ) complex. HJ DNA is sandwiched between 2 RuvA tetramers; dsDNA enters through RuvA and exits via RuvB. An RuvB hexamer assembles on each DNA strand where it exits the tetramer. Each RuvB hexamer is contacted by two RuvA subunits (via domain III) on 2 adjacent RuvB subunits; this complex drives branch migration. In the full resolvosome a probable DNA-RuvA(4)-RuvB(12)-RuvC(2) complex forms which resolves the HJ.</text>
</comment>
<comment type="subcellular location">
    <subcellularLocation>
        <location evidence="1">Cytoplasm</location>
    </subcellularLocation>
</comment>
<comment type="domain">
    <text evidence="1">Has three domains with a flexible linker between the domains II and III and assumes an 'L' shape. Domain III is highly mobile and contacts RuvB.</text>
</comment>
<comment type="similarity">
    <text evidence="1">Belongs to the RuvA family.</text>
</comment>
<evidence type="ECO:0000255" key="1">
    <source>
        <dbReference type="HAMAP-Rule" id="MF_00031"/>
    </source>
</evidence>
<dbReference type="EMBL" id="AE017143">
    <property type="protein sequence ID" value="AAP96513.1"/>
    <property type="molecule type" value="Genomic_DNA"/>
</dbReference>
<dbReference type="RefSeq" id="WP_010945542.1">
    <property type="nucleotide sequence ID" value="NC_002940.2"/>
</dbReference>
<dbReference type="SMR" id="Q7VKV4"/>
<dbReference type="STRING" id="233412.HD_1758"/>
<dbReference type="KEGG" id="hdu:HD_1758"/>
<dbReference type="eggNOG" id="COG0632">
    <property type="taxonomic scope" value="Bacteria"/>
</dbReference>
<dbReference type="HOGENOM" id="CLU_087936_0_0_6"/>
<dbReference type="OrthoDB" id="5293449at2"/>
<dbReference type="Proteomes" id="UP000001022">
    <property type="component" value="Chromosome"/>
</dbReference>
<dbReference type="GO" id="GO:0005737">
    <property type="term" value="C:cytoplasm"/>
    <property type="evidence" value="ECO:0007669"/>
    <property type="project" value="UniProtKB-SubCell"/>
</dbReference>
<dbReference type="GO" id="GO:0009379">
    <property type="term" value="C:Holliday junction helicase complex"/>
    <property type="evidence" value="ECO:0007669"/>
    <property type="project" value="InterPro"/>
</dbReference>
<dbReference type="GO" id="GO:0048476">
    <property type="term" value="C:Holliday junction resolvase complex"/>
    <property type="evidence" value="ECO:0007669"/>
    <property type="project" value="UniProtKB-UniRule"/>
</dbReference>
<dbReference type="GO" id="GO:0005524">
    <property type="term" value="F:ATP binding"/>
    <property type="evidence" value="ECO:0007669"/>
    <property type="project" value="InterPro"/>
</dbReference>
<dbReference type="GO" id="GO:0000400">
    <property type="term" value="F:four-way junction DNA binding"/>
    <property type="evidence" value="ECO:0007669"/>
    <property type="project" value="UniProtKB-UniRule"/>
</dbReference>
<dbReference type="GO" id="GO:0009378">
    <property type="term" value="F:four-way junction helicase activity"/>
    <property type="evidence" value="ECO:0007669"/>
    <property type="project" value="InterPro"/>
</dbReference>
<dbReference type="GO" id="GO:0006310">
    <property type="term" value="P:DNA recombination"/>
    <property type="evidence" value="ECO:0007669"/>
    <property type="project" value="UniProtKB-UniRule"/>
</dbReference>
<dbReference type="GO" id="GO:0006281">
    <property type="term" value="P:DNA repair"/>
    <property type="evidence" value="ECO:0007669"/>
    <property type="project" value="UniProtKB-UniRule"/>
</dbReference>
<dbReference type="CDD" id="cd14332">
    <property type="entry name" value="UBA_RuvA_C"/>
    <property type="match status" value="1"/>
</dbReference>
<dbReference type="FunFam" id="2.40.50.140:FF:000083">
    <property type="entry name" value="Holliday junction ATP-dependent DNA helicase RuvA"/>
    <property type="match status" value="1"/>
</dbReference>
<dbReference type="Gene3D" id="1.10.150.20">
    <property type="entry name" value="5' to 3' exonuclease, C-terminal subdomain"/>
    <property type="match status" value="1"/>
</dbReference>
<dbReference type="Gene3D" id="1.10.8.10">
    <property type="entry name" value="DNA helicase RuvA subunit, C-terminal domain"/>
    <property type="match status" value="1"/>
</dbReference>
<dbReference type="Gene3D" id="2.40.50.140">
    <property type="entry name" value="Nucleic acid-binding proteins"/>
    <property type="match status" value="1"/>
</dbReference>
<dbReference type="HAMAP" id="MF_00031">
    <property type="entry name" value="DNA_HJ_migration_RuvA"/>
    <property type="match status" value="1"/>
</dbReference>
<dbReference type="InterPro" id="IPR013849">
    <property type="entry name" value="DNA_helicase_Holl-junc_RuvA_I"/>
</dbReference>
<dbReference type="InterPro" id="IPR003583">
    <property type="entry name" value="Hlx-hairpin-Hlx_DNA-bd_motif"/>
</dbReference>
<dbReference type="InterPro" id="IPR012340">
    <property type="entry name" value="NA-bd_OB-fold"/>
</dbReference>
<dbReference type="InterPro" id="IPR000085">
    <property type="entry name" value="RuvA"/>
</dbReference>
<dbReference type="InterPro" id="IPR010994">
    <property type="entry name" value="RuvA_2-like"/>
</dbReference>
<dbReference type="InterPro" id="IPR011114">
    <property type="entry name" value="RuvA_C"/>
</dbReference>
<dbReference type="InterPro" id="IPR036267">
    <property type="entry name" value="RuvA_C_sf"/>
</dbReference>
<dbReference type="NCBIfam" id="TIGR00084">
    <property type="entry name" value="ruvA"/>
    <property type="match status" value="1"/>
</dbReference>
<dbReference type="Pfam" id="PF14520">
    <property type="entry name" value="HHH_5"/>
    <property type="match status" value="1"/>
</dbReference>
<dbReference type="Pfam" id="PF07499">
    <property type="entry name" value="RuvA_C"/>
    <property type="match status" value="1"/>
</dbReference>
<dbReference type="Pfam" id="PF01330">
    <property type="entry name" value="RuvA_N"/>
    <property type="match status" value="1"/>
</dbReference>
<dbReference type="SMART" id="SM00278">
    <property type="entry name" value="HhH1"/>
    <property type="match status" value="2"/>
</dbReference>
<dbReference type="SUPFAM" id="SSF46929">
    <property type="entry name" value="DNA helicase RuvA subunit, C-terminal domain"/>
    <property type="match status" value="1"/>
</dbReference>
<dbReference type="SUPFAM" id="SSF50249">
    <property type="entry name" value="Nucleic acid-binding proteins"/>
    <property type="match status" value="1"/>
</dbReference>
<dbReference type="SUPFAM" id="SSF47781">
    <property type="entry name" value="RuvA domain 2-like"/>
    <property type="match status" value="1"/>
</dbReference>
<proteinExistence type="inferred from homology"/>
<accession>Q7VKV4</accession>
<reference key="1">
    <citation type="submission" date="2003-06" db="EMBL/GenBank/DDBJ databases">
        <title>The complete genome sequence of Haemophilus ducreyi.</title>
        <authorList>
            <person name="Munson R.S. Jr."/>
            <person name="Ray W.C."/>
            <person name="Mahairas G."/>
            <person name="Sabo P."/>
            <person name="Mungur R."/>
            <person name="Johnson L."/>
            <person name="Nguyen D."/>
            <person name="Wang J."/>
            <person name="Forst C."/>
            <person name="Hood L."/>
        </authorList>
    </citation>
    <scope>NUCLEOTIDE SEQUENCE [LARGE SCALE GENOMIC DNA]</scope>
    <source>
        <strain>35000HP / ATCC 700724</strain>
    </source>
</reference>
<keyword id="KW-0963">Cytoplasm</keyword>
<keyword id="KW-0227">DNA damage</keyword>
<keyword id="KW-0233">DNA recombination</keyword>
<keyword id="KW-0234">DNA repair</keyword>
<keyword id="KW-0238">DNA-binding</keyword>
<keyword id="KW-1185">Reference proteome</keyword>
<name>RUVA_HAEDU</name>